<comment type="function">
    <text evidence="1">Quinone reductase that provides resistance to thiol-specific stress caused by electrophilic quinones.</text>
</comment>
<comment type="function">
    <text evidence="1">Also exhibits azoreductase activity. Catalyzes the reductive cleavage of the azo bond in aromatic azo compounds to the corresponding amines.</text>
</comment>
<comment type="catalytic activity">
    <reaction evidence="1">
        <text>2 a quinone + NADH + H(+) = 2 a 1,4-benzosemiquinone + NAD(+)</text>
        <dbReference type="Rhea" id="RHEA:65952"/>
        <dbReference type="ChEBI" id="CHEBI:15378"/>
        <dbReference type="ChEBI" id="CHEBI:57540"/>
        <dbReference type="ChEBI" id="CHEBI:57945"/>
        <dbReference type="ChEBI" id="CHEBI:132124"/>
        <dbReference type="ChEBI" id="CHEBI:134225"/>
    </reaction>
</comment>
<comment type="catalytic activity">
    <reaction evidence="1">
        <text>N,N-dimethyl-1,4-phenylenediamine + anthranilate + 2 NAD(+) = 2-(4-dimethylaminophenyl)diazenylbenzoate + 2 NADH + 2 H(+)</text>
        <dbReference type="Rhea" id="RHEA:55872"/>
        <dbReference type="ChEBI" id="CHEBI:15378"/>
        <dbReference type="ChEBI" id="CHEBI:15783"/>
        <dbReference type="ChEBI" id="CHEBI:16567"/>
        <dbReference type="ChEBI" id="CHEBI:57540"/>
        <dbReference type="ChEBI" id="CHEBI:57945"/>
        <dbReference type="ChEBI" id="CHEBI:71579"/>
        <dbReference type="EC" id="1.7.1.17"/>
    </reaction>
</comment>
<comment type="cofactor">
    <cofactor evidence="1">
        <name>FMN</name>
        <dbReference type="ChEBI" id="CHEBI:58210"/>
    </cofactor>
    <text evidence="1">Binds 1 FMN per subunit.</text>
</comment>
<comment type="subunit">
    <text evidence="1">Homodimer.</text>
</comment>
<comment type="similarity">
    <text evidence="1">Belongs to the azoreductase type 1 family.</text>
</comment>
<organism>
    <name type="scientific">Streptococcus agalactiae serotype III (strain NEM316)</name>
    <dbReference type="NCBI Taxonomy" id="211110"/>
    <lineage>
        <taxon>Bacteria</taxon>
        <taxon>Bacillati</taxon>
        <taxon>Bacillota</taxon>
        <taxon>Bacilli</taxon>
        <taxon>Lactobacillales</taxon>
        <taxon>Streptococcaceae</taxon>
        <taxon>Streptococcus</taxon>
    </lineage>
</organism>
<protein>
    <recommendedName>
        <fullName evidence="1">FMN-dependent NADH:quinone oxidoreductase</fullName>
        <ecNumber evidence="1">1.6.5.-</ecNumber>
    </recommendedName>
    <alternativeName>
        <fullName evidence="1">Azo-dye reductase</fullName>
    </alternativeName>
    <alternativeName>
        <fullName evidence="1">FMN-dependent NADH-azo compound oxidoreductase</fullName>
    </alternativeName>
    <alternativeName>
        <fullName evidence="1">FMN-dependent NADH-azoreductase</fullName>
        <ecNumber evidence="1">1.7.1.17</ecNumber>
    </alternativeName>
</protein>
<evidence type="ECO:0000255" key="1">
    <source>
        <dbReference type="HAMAP-Rule" id="MF_01216"/>
    </source>
</evidence>
<feature type="chain" id="PRO_0000245979" description="FMN-dependent NADH:quinone oxidoreductase">
    <location>
        <begin position="1"/>
        <end position="213"/>
    </location>
</feature>
<gene>
    <name evidence="1" type="primary">azoR</name>
    <name type="ordered locus">gbs0259</name>
</gene>
<proteinExistence type="inferred from homology"/>
<reference key="1">
    <citation type="journal article" date="2002" name="Mol. Microbiol.">
        <title>Genome sequence of Streptococcus agalactiae, a pathogen causing invasive neonatal disease.</title>
        <authorList>
            <person name="Glaser P."/>
            <person name="Rusniok C."/>
            <person name="Buchrieser C."/>
            <person name="Chevalier F."/>
            <person name="Frangeul L."/>
            <person name="Msadek T."/>
            <person name="Zouine M."/>
            <person name="Couve E."/>
            <person name="Lalioui L."/>
            <person name="Poyart C."/>
            <person name="Trieu-Cuot P."/>
            <person name="Kunst F."/>
        </authorList>
    </citation>
    <scope>NUCLEOTIDE SEQUENCE [LARGE SCALE GENOMIC DNA]</scope>
    <source>
        <strain>NEM316</strain>
    </source>
</reference>
<keyword id="KW-0285">Flavoprotein</keyword>
<keyword id="KW-0288">FMN</keyword>
<keyword id="KW-0520">NAD</keyword>
<keyword id="KW-0560">Oxidoreductase</keyword>
<dbReference type="EC" id="1.6.5.-" evidence="1"/>
<dbReference type="EC" id="1.7.1.17" evidence="1"/>
<dbReference type="EMBL" id="AL766844">
    <property type="protein sequence ID" value="CAD45904.1"/>
    <property type="molecule type" value="Genomic_DNA"/>
</dbReference>
<dbReference type="RefSeq" id="WP_001094117.1">
    <property type="nucleotide sequence ID" value="NC_004368.1"/>
</dbReference>
<dbReference type="SMR" id="Q8E797"/>
<dbReference type="KEGG" id="san:gbs0259"/>
<dbReference type="eggNOG" id="COG1182">
    <property type="taxonomic scope" value="Bacteria"/>
</dbReference>
<dbReference type="HOGENOM" id="CLU_088964_3_0_9"/>
<dbReference type="Proteomes" id="UP000000823">
    <property type="component" value="Chromosome"/>
</dbReference>
<dbReference type="GO" id="GO:0009055">
    <property type="term" value="F:electron transfer activity"/>
    <property type="evidence" value="ECO:0007669"/>
    <property type="project" value="UniProtKB-UniRule"/>
</dbReference>
<dbReference type="GO" id="GO:0010181">
    <property type="term" value="F:FMN binding"/>
    <property type="evidence" value="ECO:0007669"/>
    <property type="project" value="UniProtKB-UniRule"/>
</dbReference>
<dbReference type="GO" id="GO:0016652">
    <property type="term" value="F:oxidoreductase activity, acting on NAD(P)H as acceptor"/>
    <property type="evidence" value="ECO:0007669"/>
    <property type="project" value="UniProtKB-UniRule"/>
</dbReference>
<dbReference type="GO" id="GO:0016655">
    <property type="term" value="F:oxidoreductase activity, acting on NAD(P)H, quinone or similar compound as acceptor"/>
    <property type="evidence" value="ECO:0007669"/>
    <property type="project" value="InterPro"/>
</dbReference>
<dbReference type="Gene3D" id="3.40.50.360">
    <property type="match status" value="1"/>
</dbReference>
<dbReference type="HAMAP" id="MF_01216">
    <property type="entry name" value="Azoreductase_type1"/>
    <property type="match status" value="1"/>
</dbReference>
<dbReference type="InterPro" id="IPR003680">
    <property type="entry name" value="Flavodoxin_fold"/>
</dbReference>
<dbReference type="InterPro" id="IPR029039">
    <property type="entry name" value="Flavoprotein-like_sf"/>
</dbReference>
<dbReference type="InterPro" id="IPR050104">
    <property type="entry name" value="FMN-dep_NADH:Q_OxRdtase_AzoR1"/>
</dbReference>
<dbReference type="InterPro" id="IPR023048">
    <property type="entry name" value="NADH:quinone_OxRdtase_FMN_depd"/>
</dbReference>
<dbReference type="PANTHER" id="PTHR43741">
    <property type="entry name" value="FMN-DEPENDENT NADH-AZOREDUCTASE 1"/>
    <property type="match status" value="1"/>
</dbReference>
<dbReference type="PANTHER" id="PTHR43741:SF4">
    <property type="entry name" value="FMN-DEPENDENT NADH:QUINONE OXIDOREDUCTASE"/>
    <property type="match status" value="1"/>
</dbReference>
<dbReference type="Pfam" id="PF02525">
    <property type="entry name" value="Flavodoxin_2"/>
    <property type="match status" value="1"/>
</dbReference>
<dbReference type="SUPFAM" id="SSF52218">
    <property type="entry name" value="Flavoproteins"/>
    <property type="match status" value="1"/>
</dbReference>
<name>AZOR_STRA3</name>
<accession>Q8E797</accession>
<sequence>MNTLIVNSHPDFSNPYSFTTILQEKFIELYNEHFPNHQLSILNLYDCVLPEITKEVLLSIWSKQRKGLELTADEIVQAKISKDLLEQFKSHHRIVFVSPMHNYNVTARAKTYIDNIFIAGETFKYTENGSVGLMTDDYRLLMLESAGSIYSKGQYSPYEFPVHYLKAIFKDFMAFDDFCVVRAEGTDILDRQVVLDKMNQDLREAFEAFYSKE</sequence>